<feature type="chain" id="PRO_0000235553" description="Aspartate--tRNA(Asp/Asn) ligase">
    <location>
        <begin position="1"/>
        <end position="600"/>
    </location>
</feature>
<feature type="region of interest" description="Aspartate" evidence="1">
    <location>
        <begin position="200"/>
        <end position="203"/>
    </location>
</feature>
<feature type="binding site" evidence="1">
    <location>
        <position position="176"/>
    </location>
    <ligand>
        <name>L-aspartate</name>
        <dbReference type="ChEBI" id="CHEBI:29991"/>
    </ligand>
</feature>
<feature type="binding site" evidence="1">
    <location>
        <begin position="222"/>
        <end position="224"/>
    </location>
    <ligand>
        <name>ATP</name>
        <dbReference type="ChEBI" id="CHEBI:30616"/>
    </ligand>
</feature>
<feature type="binding site" evidence="1">
    <location>
        <position position="222"/>
    </location>
    <ligand>
        <name>L-aspartate</name>
        <dbReference type="ChEBI" id="CHEBI:29991"/>
    </ligand>
</feature>
<feature type="binding site" evidence="1">
    <location>
        <position position="452"/>
    </location>
    <ligand>
        <name>L-aspartate</name>
        <dbReference type="ChEBI" id="CHEBI:29991"/>
    </ligand>
</feature>
<feature type="binding site" evidence="1">
    <location>
        <position position="490"/>
    </location>
    <ligand>
        <name>ATP</name>
        <dbReference type="ChEBI" id="CHEBI:30616"/>
    </ligand>
</feature>
<feature type="binding site" evidence="1">
    <location>
        <position position="497"/>
    </location>
    <ligand>
        <name>L-aspartate</name>
        <dbReference type="ChEBI" id="CHEBI:29991"/>
    </ligand>
</feature>
<feature type="binding site" evidence="1">
    <location>
        <begin position="542"/>
        <end position="545"/>
    </location>
    <ligand>
        <name>ATP</name>
        <dbReference type="ChEBI" id="CHEBI:30616"/>
    </ligand>
</feature>
<feature type="site" description="Important for tRNA non-discrimination" evidence="1">
    <location>
        <position position="33"/>
    </location>
</feature>
<proteinExistence type="inferred from homology"/>
<keyword id="KW-0030">Aminoacyl-tRNA synthetase</keyword>
<keyword id="KW-0067">ATP-binding</keyword>
<keyword id="KW-0963">Cytoplasm</keyword>
<keyword id="KW-0436">Ligase</keyword>
<keyword id="KW-0547">Nucleotide-binding</keyword>
<keyword id="KW-0648">Protein biosynthesis</keyword>
<dbReference type="EC" id="6.1.1.23" evidence="1"/>
<dbReference type="EMBL" id="CP000053">
    <property type="protein sequence ID" value="AAY61989.1"/>
    <property type="molecule type" value="Genomic_DNA"/>
</dbReference>
<dbReference type="SMR" id="Q4UKE2"/>
<dbReference type="STRING" id="315456.RF_1138"/>
<dbReference type="KEGG" id="rfe:RF_1138"/>
<dbReference type="eggNOG" id="COG0173">
    <property type="taxonomic scope" value="Bacteria"/>
</dbReference>
<dbReference type="HOGENOM" id="CLU_014330_3_2_5"/>
<dbReference type="OrthoDB" id="9802326at2"/>
<dbReference type="Proteomes" id="UP000008548">
    <property type="component" value="Chromosome"/>
</dbReference>
<dbReference type="GO" id="GO:0005737">
    <property type="term" value="C:cytoplasm"/>
    <property type="evidence" value="ECO:0007669"/>
    <property type="project" value="UniProtKB-SubCell"/>
</dbReference>
<dbReference type="GO" id="GO:0004815">
    <property type="term" value="F:aspartate-tRNA ligase activity"/>
    <property type="evidence" value="ECO:0007669"/>
    <property type="project" value="UniProtKB-UniRule"/>
</dbReference>
<dbReference type="GO" id="GO:0050560">
    <property type="term" value="F:aspartate-tRNA(Asn) ligase activity"/>
    <property type="evidence" value="ECO:0007669"/>
    <property type="project" value="UniProtKB-EC"/>
</dbReference>
<dbReference type="GO" id="GO:0005524">
    <property type="term" value="F:ATP binding"/>
    <property type="evidence" value="ECO:0007669"/>
    <property type="project" value="UniProtKB-UniRule"/>
</dbReference>
<dbReference type="GO" id="GO:0003676">
    <property type="term" value="F:nucleic acid binding"/>
    <property type="evidence" value="ECO:0007669"/>
    <property type="project" value="InterPro"/>
</dbReference>
<dbReference type="GO" id="GO:0006422">
    <property type="term" value="P:aspartyl-tRNA aminoacylation"/>
    <property type="evidence" value="ECO:0007669"/>
    <property type="project" value="UniProtKB-UniRule"/>
</dbReference>
<dbReference type="CDD" id="cd00777">
    <property type="entry name" value="AspRS_core"/>
    <property type="match status" value="1"/>
</dbReference>
<dbReference type="CDD" id="cd04317">
    <property type="entry name" value="EcAspRS_like_N"/>
    <property type="match status" value="1"/>
</dbReference>
<dbReference type="Gene3D" id="3.30.930.10">
    <property type="entry name" value="Bira Bifunctional Protein, Domain 2"/>
    <property type="match status" value="1"/>
</dbReference>
<dbReference type="Gene3D" id="3.30.1360.30">
    <property type="entry name" value="GAD-like domain"/>
    <property type="match status" value="1"/>
</dbReference>
<dbReference type="Gene3D" id="2.40.50.140">
    <property type="entry name" value="Nucleic acid-binding proteins"/>
    <property type="match status" value="1"/>
</dbReference>
<dbReference type="HAMAP" id="MF_00044">
    <property type="entry name" value="Asp_tRNA_synth_type1"/>
    <property type="match status" value="1"/>
</dbReference>
<dbReference type="InterPro" id="IPR004364">
    <property type="entry name" value="Aa-tRNA-synt_II"/>
</dbReference>
<dbReference type="InterPro" id="IPR006195">
    <property type="entry name" value="aa-tRNA-synth_II"/>
</dbReference>
<dbReference type="InterPro" id="IPR045864">
    <property type="entry name" value="aa-tRNA-synth_II/BPL/LPL"/>
</dbReference>
<dbReference type="InterPro" id="IPR004524">
    <property type="entry name" value="Asp-tRNA-ligase_1"/>
</dbReference>
<dbReference type="InterPro" id="IPR047089">
    <property type="entry name" value="Asp-tRNA-ligase_1_N"/>
</dbReference>
<dbReference type="InterPro" id="IPR002312">
    <property type="entry name" value="Asp/Asn-tRNA-synth_IIb"/>
</dbReference>
<dbReference type="InterPro" id="IPR047090">
    <property type="entry name" value="AspRS_core"/>
</dbReference>
<dbReference type="InterPro" id="IPR004115">
    <property type="entry name" value="GAD-like_sf"/>
</dbReference>
<dbReference type="InterPro" id="IPR029351">
    <property type="entry name" value="GAD_dom"/>
</dbReference>
<dbReference type="InterPro" id="IPR012340">
    <property type="entry name" value="NA-bd_OB-fold"/>
</dbReference>
<dbReference type="InterPro" id="IPR004365">
    <property type="entry name" value="NA-bd_OB_tRNA"/>
</dbReference>
<dbReference type="NCBIfam" id="TIGR00459">
    <property type="entry name" value="aspS_bact"/>
    <property type="match status" value="1"/>
</dbReference>
<dbReference type="NCBIfam" id="NF001750">
    <property type="entry name" value="PRK00476.1"/>
    <property type="match status" value="1"/>
</dbReference>
<dbReference type="PANTHER" id="PTHR22594:SF5">
    <property type="entry name" value="ASPARTATE--TRNA LIGASE, MITOCHONDRIAL"/>
    <property type="match status" value="1"/>
</dbReference>
<dbReference type="PANTHER" id="PTHR22594">
    <property type="entry name" value="ASPARTYL/LYSYL-TRNA SYNTHETASE"/>
    <property type="match status" value="1"/>
</dbReference>
<dbReference type="Pfam" id="PF02938">
    <property type="entry name" value="GAD"/>
    <property type="match status" value="1"/>
</dbReference>
<dbReference type="Pfam" id="PF00152">
    <property type="entry name" value="tRNA-synt_2"/>
    <property type="match status" value="1"/>
</dbReference>
<dbReference type="Pfam" id="PF01336">
    <property type="entry name" value="tRNA_anti-codon"/>
    <property type="match status" value="1"/>
</dbReference>
<dbReference type="PRINTS" id="PR01042">
    <property type="entry name" value="TRNASYNTHASP"/>
</dbReference>
<dbReference type="SUPFAM" id="SSF55681">
    <property type="entry name" value="Class II aaRS and biotin synthetases"/>
    <property type="match status" value="1"/>
</dbReference>
<dbReference type="SUPFAM" id="SSF55261">
    <property type="entry name" value="GAD domain-like"/>
    <property type="match status" value="1"/>
</dbReference>
<dbReference type="SUPFAM" id="SSF50249">
    <property type="entry name" value="Nucleic acid-binding proteins"/>
    <property type="match status" value="1"/>
</dbReference>
<dbReference type="PROSITE" id="PS50862">
    <property type="entry name" value="AA_TRNA_LIGASE_II"/>
    <property type="match status" value="1"/>
</dbReference>
<reference key="1">
    <citation type="journal article" date="2005" name="PLoS Biol.">
        <title>The genome sequence of Rickettsia felis identifies the first putative conjugative plasmid in an obligate intracellular parasite.</title>
        <authorList>
            <person name="Ogata H."/>
            <person name="Renesto P."/>
            <person name="Audic S."/>
            <person name="Robert C."/>
            <person name="Blanc G."/>
            <person name="Fournier P.-E."/>
            <person name="Parinello H."/>
            <person name="Claverie J.-M."/>
            <person name="Raoult D."/>
        </authorList>
    </citation>
    <scope>NUCLEOTIDE SEQUENCE [LARGE SCALE GENOMIC DNA]</scope>
    <source>
        <strain>ATCC VR-1525 / URRWXCal2</strain>
    </source>
</reference>
<name>SYDND_RICFE</name>
<protein>
    <recommendedName>
        <fullName evidence="1">Aspartate--tRNA(Asp/Asn) ligase</fullName>
        <ecNumber evidence="1">6.1.1.23</ecNumber>
    </recommendedName>
    <alternativeName>
        <fullName evidence="1">Aspartyl-tRNA synthetase</fullName>
        <shortName evidence="1">AspRS</shortName>
    </alternativeName>
    <alternativeName>
        <fullName evidence="1">Non-discriminating aspartyl-tRNA synthetase</fullName>
        <shortName evidence="1">ND-AspRS</shortName>
    </alternativeName>
</protein>
<evidence type="ECO:0000255" key="1">
    <source>
        <dbReference type="HAMAP-Rule" id="MF_00044"/>
    </source>
</evidence>
<sequence>MHKYRTHNCNELQISDVRKEVKLSGWVHRRRDHGNLVFIDLRDHYGITQIVFTDQNQQLMEDASRLRYESVITVRGTIVARSNDTINDTLPTGHIEVLAGEFIVESAADTLPFVINTEKDAPEETRLKHRFLDLRREKLHNNIILRSQIISHIRHLMTGRGFTEFQTPILTASSPEGARDFLVPSRMHPGKFYALPQAPQQFKQLLMVSGFDRYFQIAPCFRDEDARADRSPGEFYQLDVEMSFVTQEDIFSTIEPVMYDLFTKFTAKKVSETPFVRIPYNESMLKYGSDKPDLRNPIIIADVTEIFRDSDFTIFRENIKKGSIVRAIPAPKAAALPRSFFDKMIEFAISEGAGGLGYIQFSETGEAKGPVAKFLSPQQLESLKATASISNGDAVFFASDKKEKAAKLAGKVRIRLGEELDLLEKDCFKFCWITDFPFYELNEDTGKIDFSHNPFSMPQGGLEALEQAKTTEELLELTAYQYDIVCNGIELSSGAIRNHKPEIMYKAFSMAGYSEEEVDKRFGGMIRAFKFGAPPHGGIAPGIDRIVMLLAEATNIREIIAFPLNQQAEDLLMNAPSYVEDKALKELSIMLSPSILKNMK</sequence>
<gene>
    <name evidence="1" type="primary">aspS</name>
    <name type="ordered locus">RF_1138</name>
</gene>
<comment type="function">
    <text evidence="1">Aspartyl-tRNA synthetase with relaxed tRNA specificity since it is able to aspartylate not only its cognate tRNA(Asp) but also tRNA(Asn). Reaction proceeds in two steps: L-aspartate is first activated by ATP to form Asp-AMP and then transferred to the acceptor end of tRNA(Asp/Asn).</text>
</comment>
<comment type="catalytic activity">
    <reaction evidence="1">
        <text>tRNA(Asx) + L-aspartate + ATP = L-aspartyl-tRNA(Asx) + AMP + diphosphate</text>
        <dbReference type="Rhea" id="RHEA:18349"/>
        <dbReference type="Rhea" id="RHEA-COMP:9710"/>
        <dbReference type="Rhea" id="RHEA-COMP:9711"/>
        <dbReference type="ChEBI" id="CHEBI:29991"/>
        <dbReference type="ChEBI" id="CHEBI:30616"/>
        <dbReference type="ChEBI" id="CHEBI:33019"/>
        <dbReference type="ChEBI" id="CHEBI:78442"/>
        <dbReference type="ChEBI" id="CHEBI:78516"/>
        <dbReference type="ChEBI" id="CHEBI:456215"/>
        <dbReference type="EC" id="6.1.1.23"/>
    </reaction>
</comment>
<comment type="subunit">
    <text evidence="1">Homodimer.</text>
</comment>
<comment type="subcellular location">
    <subcellularLocation>
        <location evidence="1">Cytoplasm</location>
    </subcellularLocation>
</comment>
<comment type="similarity">
    <text evidence="1">Belongs to the class-II aminoacyl-tRNA synthetase family. Type 1 subfamily.</text>
</comment>
<accession>Q4UKE2</accession>
<organism>
    <name type="scientific">Rickettsia felis (strain ATCC VR-1525 / URRWXCal2)</name>
    <name type="common">Rickettsia azadi</name>
    <dbReference type="NCBI Taxonomy" id="315456"/>
    <lineage>
        <taxon>Bacteria</taxon>
        <taxon>Pseudomonadati</taxon>
        <taxon>Pseudomonadota</taxon>
        <taxon>Alphaproteobacteria</taxon>
        <taxon>Rickettsiales</taxon>
        <taxon>Rickettsiaceae</taxon>
        <taxon>Rickettsieae</taxon>
        <taxon>Rickettsia</taxon>
        <taxon>spotted fever group</taxon>
    </lineage>
</organism>